<organism>
    <name type="scientific">Finegoldia magna (strain ATCC 29328 / DSM 20472 / WAL 2508)</name>
    <name type="common">Peptostreptococcus magnus</name>
    <dbReference type="NCBI Taxonomy" id="334413"/>
    <lineage>
        <taxon>Bacteria</taxon>
        <taxon>Bacillati</taxon>
        <taxon>Bacillota</taxon>
        <taxon>Tissierellia</taxon>
        <taxon>Tissierellales</taxon>
        <taxon>Peptoniphilaceae</taxon>
        <taxon>Finegoldia</taxon>
    </lineage>
</organism>
<proteinExistence type="inferred from homology"/>
<name>PNP_FINM2</name>
<comment type="function">
    <text evidence="1">Involved in mRNA degradation. Catalyzes the phosphorolysis of single-stranded polyribonucleotides processively in the 3'- to 5'-direction.</text>
</comment>
<comment type="catalytic activity">
    <reaction evidence="1">
        <text>RNA(n+1) + phosphate = RNA(n) + a ribonucleoside 5'-diphosphate</text>
        <dbReference type="Rhea" id="RHEA:22096"/>
        <dbReference type="Rhea" id="RHEA-COMP:14527"/>
        <dbReference type="Rhea" id="RHEA-COMP:17342"/>
        <dbReference type="ChEBI" id="CHEBI:43474"/>
        <dbReference type="ChEBI" id="CHEBI:57930"/>
        <dbReference type="ChEBI" id="CHEBI:140395"/>
        <dbReference type="EC" id="2.7.7.8"/>
    </reaction>
</comment>
<comment type="cofactor">
    <cofactor evidence="1">
        <name>Mg(2+)</name>
        <dbReference type="ChEBI" id="CHEBI:18420"/>
    </cofactor>
</comment>
<comment type="subcellular location">
    <subcellularLocation>
        <location evidence="1">Cytoplasm</location>
    </subcellularLocation>
</comment>
<comment type="similarity">
    <text evidence="1">Belongs to the polyribonucleotide nucleotidyltransferase family.</text>
</comment>
<gene>
    <name evidence="1" type="primary">pnp</name>
    <name type="ordered locus">FMG_0761</name>
</gene>
<reference key="1">
    <citation type="journal article" date="2008" name="DNA Res.">
        <title>Complete genome sequence of Finegoldia magna, an anaerobic opportunistic pathogen.</title>
        <authorList>
            <person name="Goto T."/>
            <person name="Yamashita A."/>
            <person name="Hirakawa H."/>
            <person name="Matsutani M."/>
            <person name="Todo K."/>
            <person name="Ohshima K."/>
            <person name="Toh H."/>
            <person name="Miyamoto K."/>
            <person name="Kuhara S."/>
            <person name="Hattori M."/>
            <person name="Shimizu T."/>
            <person name="Akimoto S."/>
        </authorList>
    </citation>
    <scope>NUCLEOTIDE SEQUENCE [LARGE SCALE GENOMIC DNA]</scope>
    <source>
        <strain>ATCC 29328 / DSM 20472 / WAL 2508</strain>
    </source>
</reference>
<keyword id="KW-0963">Cytoplasm</keyword>
<keyword id="KW-0460">Magnesium</keyword>
<keyword id="KW-0479">Metal-binding</keyword>
<keyword id="KW-0548">Nucleotidyltransferase</keyword>
<keyword id="KW-1185">Reference proteome</keyword>
<keyword id="KW-0694">RNA-binding</keyword>
<keyword id="KW-0808">Transferase</keyword>
<evidence type="ECO:0000255" key="1">
    <source>
        <dbReference type="HAMAP-Rule" id="MF_01595"/>
    </source>
</evidence>
<evidence type="ECO:0000256" key="2">
    <source>
        <dbReference type="SAM" id="MobiDB-lite"/>
    </source>
</evidence>
<sequence length="714" mass="79341">MIKKYEYDLCGKKIEVTIGKVAEQANGACLIQSGETVLLVTAVGSKEPREGVDFFPLTCDFEEKLYSVGKIPGGFIKREGRPSEKATLTARLIDRPLRPLFPEGYHNDVQVIATALSVDQDNTPDILAMIGSSIALSISDIPFLGPTGSVAVGMIDGEFIINPTKEQREKSDLELTVAGTKDAIMMVEAGCNNITEQQVLKAILRAHEEIKKICEFIESIQKECGKPKQEFIQPEKNIELDEEVKSFCIEDLKKITVNEDKLDREDHINTLKRSVVDYFVEKYDESIASKVSTIYDDLEKSEVRRLILEDYIRPDNRKLDQIREITCDVDILPRPHGSGLFKRGQTQVLSVTTLGTPSDAQVLDGLIEQEDKRYMHQYNFPPYSVGDARPLRSPGRREIGHGALAERALLPVIPSEEEFPYTIRVVSEVLSSNGSSSQASVCGSTLSLLDAGVPIKEPVAGIAMGLIKEDDNVVILSDIQGLEDHLGDMDFKVAGTKDGITALQMDIKITGISEEILTEALERARVGRLHILSLMNECISEPNKEISKYAPRIMVINIAPEKVREVIGPGGKVINKIIDETGVKIDTEDDGKITVAGENTESAQRAIDMIKEIVREPEIGEKYLGRVTKIMNFGAFVEILPGKEGLLHISNIAHERTNKVEDVLKENDEIMVKLMDIDDQGKMTLSRKALLPKPERKEKKNFDKKSEDQNSEDK</sequence>
<protein>
    <recommendedName>
        <fullName evidence="1">Polyribonucleotide nucleotidyltransferase</fullName>
        <ecNumber evidence="1">2.7.7.8</ecNumber>
    </recommendedName>
    <alternativeName>
        <fullName evidence="1">Polynucleotide phosphorylase</fullName>
        <shortName evidence="1">PNPase</shortName>
    </alternativeName>
</protein>
<dbReference type="EC" id="2.7.7.8" evidence="1"/>
<dbReference type="EMBL" id="AP008971">
    <property type="protein sequence ID" value="BAG08179.1"/>
    <property type="molecule type" value="Genomic_DNA"/>
</dbReference>
<dbReference type="RefSeq" id="WP_012290612.1">
    <property type="nucleotide sequence ID" value="NC_010376.1"/>
</dbReference>
<dbReference type="SMR" id="B0S1D9"/>
<dbReference type="STRING" id="334413.FMG_0761"/>
<dbReference type="KEGG" id="fma:FMG_0761"/>
<dbReference type="eggNOG" id="COG1185">
    <property type="taxonomic scope" value="Bacteria"/>
</dbReference>
<dbReference type="HOGENOM" id="CLU_004217_2_2_9"/>
<dbReference type="Proteomes" id="UP000001319">
    <property type="component" value="Chromosome"/>
</dbReference>
<dbReference type="GO" id="GO:0005829">
    <property type="term" value="C:cytosol"/>
    <property type="evidence" value="ECO:0007669"/>
    <property type="project" value="TreeGrafter"/>
</dbReference>
<dbReference type="GO" id="GO:0000175">
    <property type="term" value="F:3'-5'-RNA exonuclease activity"/>
    <property type="evidence" value="ECO:0007669"/>
    <property type="project" value="TreeGrafter"/>
</dbReference>
<dbReference type="GO" id="GO:0000287">
    <property type="term" value="F:magnesium ion binding"/>
    <property type="evidence" value="ECO:0007669"/>
    <property type="project" value="UniProtKB-UniRule"/>
</dbReference>
<dbReference type="GO" id="GO:0004654">
    <property type="term" value="F:polyribonucleotide nucleotidyltransferase activity"/>
    <property type="evidence" value="ECO:0007669"/>
    <property type="project" value="UniProtKB-UniRule"/>
</dbReference>
<dbReference type="GO" id="GO:0003723">
    <property type="term" value="F:RNA binding"/>
    <property type="evidence" value="ECO:0007669"/>
    <property type="project" value="UniProtKB-UniRule"/>
</dbReference>
<dbReference type="GO" id="GO:0006402">
    <property type="term" value="P:mRNA catabolic process"/>
    <property type="evidence" value="ECO:0007669"/>
    <property type="project" value="UniProtKB-UniRule"/>
</dbReference>
<dbReference type="GO" id="GO:0006396">
    <property type="term" value="P:RNA processing"/>
    <property type="evidence" value="ECO:0007669"/>
    <property type="project" value="InterPro"/>
</dbReference>
<dbReference type="CDD" id="cd02393">
    <property type="entry name" value="KH-I_PNPase"/>
    <property type="match status" value="1"/>
</dbReference>
<dbReference type="CDD" id="cd11363">
    <property type="entry name" value="RNase_PH_PNPase_1"/>
    <property type="match status" value="1"/>
</dbReference>
<dbReference type="CDD" id="cd11364">
    <property type="entry name" value="RNase_PH_PNPase_2"/>
    <property type="match status" value="1"/>
</dbReference>
<dbReference type="CDD" id="cd04472">
    <property type="entry name" value="S1_PNPase"/>
    <property type="match status" value="1"/>
</dbReference>
<dbReference type="FunFam" id="2.40.50.140:FF:000023">
    <property type="entry name" value="Polyribonucleotide nucleotidyltransferase"/>
    <property type="match status" value="1"/>
</dbReference>
<dbReference type="FunFam" id="3.30.1370.10:FF:000001">
    <property type="entry name" value="Polyribonucleotide nucleotidyltransferase"/>
    <property type="match status" value="1"/>
</dbReference>
<dbReference type="FunFam" id="3.30.230.70:FF:000001">
    <property type="entry name" value="Polyribonucleotide nucleotidyltransferase"/>
    <property type="match status" value="1"/>
</dbReference>
<dbReference type="FunFam" id="3.30.230.70:FF:000002">
    <property type="entry name" value="Polyribonucleotide nucleotidyltransferase"/>
    <property type="match status" value="1"/>
</dbReference>
<dbReference type="Gene3D" id="3.30.230.70">
    <property type="entry name" value="GHMP Kinase, N-terminal domain"/>
    <property type="match status" value="2"/>
</dbReference>
<dbReference type="Gene3D" id="3.30.1370.10">
    <property type="entry name" value="K Homology domain, type 1"/>
    <property type="match status" value="1"/>
</dbReference>
<dbReference type="Gene3D" id="2.40.50.140">
    <property type="entry name" value="Nucleic acid-binding proteins"/>
    <property type="match status" value="1"/>
</dbReference>
<dbReference type="HAMAP" id="MF_01595">
    <property type="entry name" value="PNPase"/>
    <property type="match status" value="1"/>
</dbReference>
<dbReference type="InterPro" id="IPR001247">
    <property type="entry name" value="ExoRNase_PH_dom1"/>
</dbReference>
<dbReference type="InterPro" id="IPR015847">
    <property type="entry name" value="ExoRNase_PH_dom2"/>
</dbReference>
<dbReference type="InterPro" id="IPR036345">
    <property type="entry name" value="ExoRNase_PH_dom2_sf"/>
</dbReference>
<dbReference type="InterPro" id="IPR004087">
    <property type="entry name" value="KH_dom"/>
</dbReference>
<dbReference type="InterPro" id="IPR004088">
    <property type="entry name" value="KH_dom_type_1"/>
</dbReference>
<dbReference type="InterPro" id="IPR036612">
    <property type="entry name" value="KH_dom_type_1_sf"/>
</dbReference>
<dbReference type="InterPro" id="IPR012340">
    <property type="entry name" value="NA-bd_OB-fold"/>
</dbReference>
<dbReference type="InterPro" id="IPR012162">
    <property type="entry name" value="PNPase"/>
</dbReference>
<dbReference type="InterPro" id="IPR027408">
    <property type="entry name" value="PNPase/RNase_PH_dom_sf"/>
</dbReference>
<dbReference type="InterPro" id="IPR015848">
    <property type="entry name" value="PNPase_PH_RNA-bd_bac/org-type"/>
</dbReference>
<dbReference type="InterPro" id="IPR020568">
    <property type="entry name" value="Ribosomal_Su5_D2-typ_SF"/>
</dbReference>
<dbReference type="InterPro" id="IPR003029">
    <property type="entry name" value="S1_domain"/>
</dbReference>
<dbReference type="NCBIfam" id="TIGR03591">
    <property type="entry name" value="polynuc_phos"/>
    <property type="match status" value="1"/>
</dbReference>
<dbReference type="NCBIfam" id="NF008805">
    <property type="entry name" value="PRK11824.1"/>
    <property type="match status" value="1"/>
</dbReference>
<dbReference type="PANTHER" id="PTHR11252">
    <property type="entry name" value="POLYRIBONUCLEOTIDE NUCLEOTIDYLTRANSFERASE"/>
    <property type="match status" value="1"/>
</dbReference>
<dbReference type="PANTHER" id="PTHR11252:SF0">
    <property type="entry name" value="POLYRIBONUCLEOTIDE NUCLEOTIDYLTRANSFERASE 1, MITOCHONDRIAL"/>
    <property type="match status" value="1"/>
</dbReference>
<dbReference type="Pfam" id="PF00013">
    <property type="entry name" value="KH_1"/>
    <property type="match status" value="1"/>
</dbReference>
<dbReference type="Pfam" id="PF03726">
    <property type="entry name" value="PNPase"/>
    <property type="match status" value="1"/>
</dbReference>
<dbReference type="Pfam" id="PF01138">
    <property type="entry name" value="RNase_PH"/>
    <property type="match status" value="2"/>
</dbReference>
<dbReference type="Pfam" id="PF03725">
    <property type="entry name" value="RNase_PH_C"/>
    <property type="match status" value="2"/>
</dbReference>
<dbReference type="Pfam" id="PF00575">
    <property type="entry name" value="S1"/>
    <property type="match status" value="1"/>
</dbReference>
<dbReference type="PIRSF" id="PIRSF005499">
    <property type="entry name" value="PNPase"/>
    <property type="match status" value="1"/>
</dbReference>
<dbReference type="SMART" id="SM00322">
    <property type="entry name" value="KH"/>
    <property type="match status" value="1"/>
</dbReference>
<dbReference type="SMART" id="SM00316">
    <property type="entry name" value="S1"/>
    <property type="match status" value="1"/>
</dbReference>
<dbReference type="SUPFAM" id="SSF54791">
    <property type="entry name" value="Eukaryotic type KH-domain (KH-domain type I)"/>
    <property type="match status" value="1"/>
</dbReference>
<dbReference type="SUPFAM" id="SSF50249">
    <property type="entry name" value="Nucleic acid-binding proteins"/>
    <property type="match status" value="1"/>
</dbReference>
<dbReference type="SUPFAM" id="SSF55666">
    <property type="entry name" value="Ribonuclease PH domain 2-like"/>
    <property type="match status" value="2"/>
</dbReference>
<dbReference type="SUPFAM" id="SSF54211">
    <property type="entry name" value="Ribosomal protein S5 domain 2-like"/>
    <property type="match status" value="2"/>
</dbReference>
<dbReference type="PROSITE" id="PS50084">
    <property type="entry name" value="KH_TYPE_1"/>
    <property type="match status" value="1"/>
</dbReference>
<dbReference type="PROSITE" id="PS50126">
    <property type="entry name" value="S1"/>
    <property type="match status" value="1"/>
</dbReference>
<feature type="chain" id="PRO_1000147921" description="Polyribonucleotide nucleotidyltransferase">
    <location>
        <begin position="1"/>
        <end position="714"/>
    </location>
</feature>
<feature type="domain" description="KH" evidence="1">
    <location>
        <begin position="551"/>
        <end position="610"/>
    </location>
</feature>
<feature type="domain" description="S1 motif" evidence="1">
    <location>
        <begin position="620"/>
        <end position="688"/>
    </location>
</feature>
<feature type="region of interest" description="Disordered" evidence="2">
    <location>
        <begin position="685"/>
        <end position="714"/>
    </location>
</feature>
<feature type="compositionally biased region" description="Basic and acidic residues" evidence="2">
    <location>
        <begin position="693"/>
        <end position="714"/>
    </location>
</feature>
<feature type="binding site" evidence="1">
    <location>
        <position position="484"/>
    </location>
    <ligand>
        <name>Mg(2+)</name>
        <dbReference type="ChEBI" id="CHEBI:18420"/>
    </ligand>
</feature>
<feature type="binding site" evidence="1">
    <location>
        <position position="490"/>
    </location>
    <ligand>
        <name>Mg(2+)</name>
        <dbReference type="ChEBI" id="CHEBI:18420"/>
    </ligand>
</feature>
<accession>B0S1D9</accession>